<name>H2AX_CICAR</name>
<reference key="1">
    <citation type="online journal article" date="1998" name="Plant Gene Register">
        <title>cDNA sequence encoding an histone H2A from Cicer arietinum.</title>
        <authorList>
            <person name="Dopico B."/>
            <person name="Esteban R."/>
            <person name="Labrador E."/>
        </authorList>
        <locator>PGR98-215</locator>
    </citation>
    <scope>NUCLEOTIDE SEQUENCE [MRNA]</scope>
    <source>
        <strain>cv. Castellana</strain>
        <tissue>Etiolated epicotyl</tissue>
    </source>
</reference>
<evidence type="ECO:0000250" key="1"/>
<evidence type="ECO:0000256" key="2">
    <source>
        <dbReference type="SAM" id="MobiDB-lite"/>
    </source>
</evidence>
<evidence type="ECO:0000305" key="3"/>
<accession>O65759</accession>
<protein>
    <recommendedName>
        <fullName>Histone H2AX</fullName>
    </recommendedName>
</protein>
<dbReference type="EMBL" id="AJ006768">
    <property type="protein sequence ID" value="CAA07234.1"/>
    <property type="molecule type" value="mRNA"/>
</dbReference>
<dbReference type="RefSeq" id="NP_001296591.1">
    <property type="nucleotide sequence ID" value="NM_001309662.1"/>
</dbReference>
<dbReference type="SMR" id="O65759"/>
<dbReference type="STRING" id="3827.O65759"/>
<dbReference type="PaxDb" id="3827-XP_004494649.1"/>
<dbReference type="GeneID" id="101514555"/>
<dbReference type="KEGG" id="cam:101514555"/>
<dbReference type="eggNOG" id="KOG1756">
    <property type="taxonomic scope" value="Eukaryota"/>
</dbReference>
<dbReference type="OrthoDB" id="9421954at2759"/>
<dbReference type="Proteomes" id="UP000087171">
    <property type="component" value="Chromosome Ca3"/>
</dbReference>
<dbReference type="GO" id="GO:0000786">
    <property type="term" value="C:nucleosome"/>
    <property type="evidence" value="ECO:0007669"/>
    <property type="project" value="UniProtKB-KW"/>
</dbReference>
<dbReference type="GO" id="GO:0005634">
    <property type="term" value="C:nucleus"/>
    <property type="evidence" value="ECO:0007669"/>
    <property type="project" value="UniProtKB-SubCell"/>
</dbReference>
<dbReference type="GO" id="GO:0003677">
    <property type="term" value="F:DNA binding"/>
    <property type="evidence" value="ECO:0007669"/>
    <property type="project" value="UniProtKB-KW"/>
</dbReference>
<dbReference type="GO" id="GO:0046982">
    <property type="term" value="F:protein heterodimerization activity"/>
    <property type="evidence" value="ECO:0007669"/>
    <property type="project" value="InterPro"/>
</dbReference>
<dbReference type="GO" id="GO:0030527">
    <property type="term" value="F:structural constituent of chromatin"/>
    <property type="evidence" value="ECO:0007669"/>
    <property type="project" value="InterPro"/>
</dbReference>
<dbReference type="CDD" id="cd00074">
    <property type="entry name" value="HFD_H2A"/>
    <property type="match status" value="1"/>
</dbReference>
<dbReference type="FunFam" id="1.10.20.10:FF:000009">
    <property type="entry name" value="Histone H2A"/>
    <property type="match status" value="1"/>
</dbReference>
<dbReference type="Gene3D" id="1.10.20.10">
    <property type="entry name" value="Histone, subunit A"/>
    <property type="match status" value="1"/>
</dbReference>
<dbReference type="InterPro" id="IPR009072">
    <property type="entry name" value="Histone-fold"/>
</dbReference>
<dbReference type="InterPro" id="IPR002119">
    <property type="entry name" value="Histone_H2A"/>
</dbReference>
<dbReference type="InterPro" id="IPR007125">
    <property type="entry name" value="Histone_H2A/H2B/H3"/>
</dbReference>
<dbReference type="InterPro" id="IPR032454">
    <property type="entry name" value="Histone_H2A_C"/>
</dbReference>
<dbReference type="InterPro" id="IPR032458">
    <property type="entry name" value="Histone_H2A_CS"/>
</dbReference>
<dbReference type="PANTHER" id="PTHR23430">
    <property type="entry name" value="HISTONE H2A"/>
    <property type="match status" value="1"/>
</dbReference>
<dbReference type="Pfam" id="PF00125">
    <property type="entry name" value="Histone"/>
    <property type="match status" value="1"/>
</dbReference>
<dbReference type="Pfam" id="PF16211">
    <property type="entry name" value="Histone_H2A_C"/>
    <property type="match status" value="1"/>
</dbReference>
<dbReference type="PRINTS" id="PR00620">
    <property type="entry name" value="HISTONEH2A"/>
</dbReference>
<dbReference type="SMART" id="SM00414">
    <property type="entry name" value="H2A"/>
    <property type="match status" value="1"/>
</dbReference>
<dbReference type="SUPFAM" id="SSF47113">
    <property type="entry name" value="Histone-fold"/>
    <property type="match status" value="1"/>
</dbReference>
<dbReference type="PROSITE" id="PS00046">
    <property type="entry name" value="HISTONE_H2A"/>
    <property type="match status" value="1"/>
</dbReference>
<sequence length="139" mass="14609">MSSTATTKGGRGKPKASKSVSRSSKAGLQFPVGRIARFLKAGKYAERVGAGAPVYLSAVLEYLAAEVLELAGNAARDNKNNRIVPRHIQLAVRNDEELSKLLGSVTIANGGVLPNIHQTLLPKKVGKGKGEIGSASQEF</sequence>
<gene>
    <name type="primary">HIS2A</name>
</gene>
<keyword id="KW-0158">Chromosome</keyword>
<keyword id="KW-0238">DNA-binding</keyword>
<keyword id="KW-0544">Nucleosome core</keyword>
<keyword id="KW-0539">Nucleus</keyword>
<keyword id="KW-0597">Phosphoprotein</keyword>
<keyword id="KW-1185">Reference proteome</keyword>
<organism>
    <name type="scientific">Cicer arietinum</name>
    <name type="common">Chickpea</name>
    <name type="synonym">Garbanzo</name>
    <dbReference type="NCBI Taxonomy" id="3827"/>
    <lineage>
        <taxon>Eukaryota</taxon>
        <taxon>Viridiplantae</taxon>
        <taxon>Streptophyta</taxon>
        <taxon>Embryophyta</taxon>
        <taxon>Tracheophyta</taxon>
        <taxon>Spermatophyta</taxon>
        <taxon>Magnoliopsida</taxon>
        <taxon>eudicotyledons</taxon>
        <taxon>Gunneridae</taxon>
        <taxon>Pentapetalae</taxon>
        <taxon>rosids</taxon>
        <taxon>fabids</taxon>
        <taxon>Fabales</taxon>
        <taxon>Fabaceae</taxon>
        <taxon>Papilionoideae</taxon>
        <taxon>50 kb inversion clade</taxon>
        <taxon>NPAAA clade</taxon>
        <taxon>Hologalegina</taxon>
        <taxon>IRL clade</taxon>
        <taxon>Cicereae</taxon>
        <taxon>Cicer</taxon>
    </lineage>
</organism>
<proteinExistence type="evidence at transcript level"/>
<feature type="chain" id="PRO_0000055219" description="Histone H2AX">
    <location>
        <begin position="1"/>
        <end position="139"/>
    </location>
</feature>
<feature type="region of interest" description="Disordered" evidence="2">
    <location>
        <begin position="1"/>
        <end position="24"/>
    </location>
</feature>
<feature type="short sequence motif" description="[ST]-Q motif">
    <location>
        <begin position="136"/>
        <end position="137"/>
    </location>
</feature>
<feature type="modified residue" description="Phosphoserine; by ATM and ATR" evidence="3">
    <location>
        <position position="136"/>
    </location>
</feature>
<comment type="function">
    <text evidence="1">Variant histone H2A which replaces conventional H2A in a subset of nucleosomes. Nucleosomes wrap and compact DNA into chromatin, limiting DNA accessibility to the cellular machineries which require DNA as a template. Histones thereby play a central role in transcription regulation, DNA repair, DNA replication and chromosomal stability. DNA accessibility is regulated via a complex set of post-translational modifications of histones, also called histone code, and nucleosome remodeling. Required for checkpoint-mediated arrest of cell cycle progression in response to low doses of ionizing radiation and for efficient repair of DNA double strand breaks (DSBs) specifically when modified by C-terminal phosphorylation (By similarity).</text>
</comment>
<comment type="subunit">
    <text evidence="1">The nucleosome is a histone octamer containing two molecules each of H2A, H2B, H3 and H4 assembled in one H3-H4 heterotetramer and two H2A-H2B heterodimers. The octamer wraps approximately 147 bp of DNA. Interacts with numerous proteins required for DNA damage signaling and repair when phosphorylated on Ser-136 (By similarity).</text>
</comment>
<comment type="subcellular location">
    <subcellularLocation>
        <location>Nucleus</location>
    </subcellularLocation>
    <subcellularLocation>
        <location>Chromosome</location>
    </subcellularLocation>
</comment>
<comment type="domain">
    <text>The [ST]-Q motif constitutes a recognition sequence for kinases from the PI3/PI4-kinase family.</text>
</comment>
<comment type="PTM">
    <text evidence="1">Phosphorylated on Ser-136 (to form gamma-H2AX) in response to DNA double strand breaks (DSBs) generated by exogenous genotoxic agents and by stalled replication forks, and may also occur during meiotic recombination events. Phosphorylation can extend up to several thousand nucleosomes from the actual site of the DSB and may mark the surrounding chromatin for recruitment of proteins required for DNA damage signaling and repair. Widespread phosphorylation may also serve to amplify the damage signal or aid repair of persistent lesions. Phosphorylation of Ser-136 in response to ionizing radiation is mediated by ATM while defects in DNA replication induce Ser-136 phosphorylation subsequent to activation of ATR. Dephosphorylation of Ser-136 by PP2A is required for DNA DSB repair (By similarity).</text>
</comment>
<comment type="similarity">
    <text evidence="3">Belongs to the histone H2A family.</text>
</comment>